<dbReference type="EC" id="2.3.1.275" evidence="1"/>
<dbReference type="EMBL" id="CP001097">
    <property type="protein sequence ID" value="ACD91438.1"/>
    <property type="molecule type" value="Genomic_DNA"/>
</dbReference>
<dbReference type="RefSeq" id="WP_012467303.1">
    <property type="nucleotide sequence ID" value="NC_010803.1"/>
</dbReference>
<dbReference type="SMR" id="B3EI29"/>
<dbReference type="STRING" id="290315.Clim_2417"/>
<dbReference type="KEGG" id="cli:Clim_2417"/>
<dbReference type="eggNOG" id="COG0344">
    <property type="taxonomic scope" value="Bacteria"/>
</dbReference>
<dbReference type="HOGENOM" id="CLU_081254_3_0_10"/>
<dbReference type="OrthoDB" id="9777124at2"/>
<dbReference type="UniPathway" id="UPA00085"/>
<dbReference type="Proteomes" id="UP000008841">
    <property type="component" value="Chromosome"/>
</dbReference>
<dbReference type="GO" id="GO:0005886">
    <property type="term" value="C:plasma membrane"/>
    <property type="evidence" value="ECO:0007669"/>
    <property type="project" value="UniProtKB-SubCell"/>
</dbReference>
<dbReference type="GO" id="GO:0043772">
    <property type="term" value="F:acyl-phosphate glycerol-3-phosphate acyltransferase activity"/>
    <property type="evidence" value="ECO:0007669"/>
    <property type="project" value="UniProtKB-UniRule"/>
</dbReference>
<dbReference type="GO" id="GO:0008654">
    <property type="term" value="P:phospholipid biosynthetic process"/>
    <property type="evidence" value="ECO:0007669"/>
    <property type="project" value="UniProtKB-UniRule"/>
</dbReference>
<dbReference type="HAMAP" id="MF_01043">
    <property type="entry name" value="PlsY"/>
    <property type="match status" value="1"/>
</dbReference>
<dbReference type="InterPro" id="IPR003811">
    <property type="entry name" value="G3P_acylTferase_PlsY"/>
</dbReference>
<dbReference type="NCBIfam" id="TIGR00023">
    <property type="entry name" value="glycerol-3-phosphate 1-O-acyltransferase PlsY"/>
    <property type="match status" value="1"/>
</dbReference>
<dbReference type="PANTHER" id="PTHR30309:SF0">
    <property type="entry name" value="GLYCEROL-3-PHOSPHATE ACYLTRANSFERASE-RELATED"/>
    <property type="match status" value="1"/>
</dbReference>
<dbReference type="PANTHER" id="PTHR30309">
    <property type="entry name" value="INNER MEMBRANE PROTEIN YGIH"/>
    <property type="match status" value="1"/>
</dbReference>
<dbReference type="Pfam" id="PF02660">
    <property type="entry name" value="G3P_acyltransf"/>
    <property type="match status" value="1"/>
</dbReference>
<dbReference type="SMART" id="SM01207">
    <property type="entry name" value="G3P_acyltransf"/>
    <property type="match status" value="1"/>
</dbReference>
<sequence>MLTLLAILAVSYLIGSIPTGIMAGKMLKGIDIRKFGSGNAGGTNAFRVLGWKTGLTVTLIDIIKGVVAAVSVVAFFRHHPIDVFPDINEVALRLLAGMSAVVGHVFTVFAGFKGGKGVSTAAGMLIGIAPVSMLMVIGIFLLTIYLSRYVSVASMLAAVAFPLIIAIRKYIFELGSGLDYYIKLFGEQLSFHDSLDYHLMIFGLIVALGILYTHRANIRRLLSGTENRVTFGKHS</sequence>
<reference key="1">
    <citation type="submission" date="2008-05" db="EMBL/GenBank/DDBJ databases">
        <title>Complete sequence of Chlorobium limicola DSM 245.</title>
        <authorList>
            <consortium name="US DOE Joint Genome Institute"/>
            <person name="Lucas S."/>
            <person name="Copeland A."/>
            <person name="Lapidus A."/>
            <person name="Glavina del Rio T."/>
            <person name="Dalin E."/>
            <person name="Tice H."/>
            <person name="Bruce D."/>
            <person name="Goodwin L."/>
            <person name="Pitluck S."/>
            <person name="Schmutz J."/>
            <person name="Larimer F."/>
            <person name="Land M."/>
            <person name="Hauser L."/>
            <person name="Kyrpides N."/>
            <person name="Ovchinnikova G."/>
            <person name="Zhao F."/>
            <person name="Li T."/>
            <person name="Liu Z."/>
            <person name="Overmann J."/>
            <person name="Bryant D.A."/>
            <person name="Richardson P."/>
        </authorList>
    </citation>
    <scope>NUCLEOTIDE SEQUENCE [LARGE SCALE GENOMIC DNA]</scope>
    <source>
        <strain>DSM 245 / NBRC 103803 / 6330</strain>
    </source>
</reference>
<organism>
    <name type="scientific">Chlorobium limicola (strain DSM 245 / NBRC 103803 / 6330)</name>
    <dbReference type="NCBI Taxonomy" id="290315"/>
    <lineage>
        <taxon>Bacteria</taxon>
        <taxon>Pseudomonadati</taxon>
        <taxon>Chlorobiota</taxon>
        <taxon>Chlorobiia</taxon>
        <taxon>Chlorobiales</taxon>
        <taxon>Chlorobiaceae</taxon>
        <taxon>Chlorobium/Pelodictyon group</taxon>
        <taxon>Chlorobium</taxon>
    </lineage>
</organism>
<keyword id="KW-0997">Cell inner membrane</keyword>
<keyword id="KW-1003">Cell membrane</keyword>
<keyword id="KW-0444">Lipid biosynthesis</keyword>
<keyword id="KW-0443">Lipid metabolism</keyword>
<keyword id="KW-0472">Membrane</keyword>
<keyword id="KW-0594">Phospholipid biosynthesis</keyword>
<keyword id="KW-1208">Phospholipid metabolism</keyword>
<keyword id="KW-0808">Transferase</keyword>
<keyword id="KW-0812">Transmembrane</keyword>
<keyword id="KW-1133">Transmembrane helix</keyword>
<accession>B3EI29</accession>
<feature type="chain" id="PRO_1000136073" description="Glycerol-3-phosphate acyltransferase">
    <location>
        <begin position="1"/>
        <end position="235"/>
    </location>
</feature>
<feature type="transmembrane region" description="Helical" evidence="1">
    <location>
        <begin position="4"/>
        <end position="24"/>
    </location>
</feature>
<feature type="transmembrane region" description="Helical" evidence="1">
    <location>
        <begin position="56"/>
        <end position="76"/>
    </location>
</feature>
<feature type="transmembrane region" description="Helical" evidence="1">
    <location>
        <begin position="94"/>
        <end position="114"/>
    </location>
</feature>
<feature type="transmembrane region" description="Helical" evidence="1">
    <location>
        <begin position="124"/>
        <end position="144"/>
    </location>
</feature>
<feature type="transmembrane region" description="Helical" evidence="1">
    <location>
        <begin position="152"/>
        <end position="172"/>
    </location>
</feature>
<feature type="transmembrane region" description="Helical" evidence="1">
    <location>
        <begin position="191"/>
        <end position="211"/>
    </location>
</feature>
<comment type="function">
    <text evidence="1">Catalyzes the transfer of an acyl group from acyl-phosphate (acyl-PO(4)) to glycerol-3-phosphate (G3P) to form lysophosphatidic acid (LPA). This enzyme utilizes acyl-phosphate as fatty acyl donor, but not acyl-CoA or acyl-ACP.</text>
</comment>
<comment type="catalytic activity">
    <reaction evidence="1">
        <text>an acyl phosphate + sn-glycerol 3-phosphate = a 1-acyl-sn-glycero-3-phosphate + phosphate</text>
        <dbReference type="Rhea" id="RHEA:34075"/>
        <dbReference type="ChEBI" id="CHEBI:43474"/>
        <dbReference type="ChEBI" id="CHEBI:57597"/>
        <dbReference type="ChEBI" id="CHEBI:57970"/>
        <dbReference type="ChEBI" id="CHEBI:59918"/>
        <dbReference type="EC" id="2.3.1.275"/>
    </reaction>
</comment>
<comment type="pathway">
    <text evidence="1">Lipid metabolism; phospholipid metabolism.</text>
</comment>
<comment type="subunit">
    <text evidence="1">Probably interacts with PlsX.</text>
</comment>
<comment type="subcellular location">
    <subcellularLocation>
        <location evidence="1">Cell inner membrane</location>
        <topology evidence="1">Multi-pass membrane protein</topology>
    </subcellularLocation>
</comment>
<comment type="similarity">
    <text evidence="1">Belongs to the PlsY family.</text>
</comment>
<name>PLSY_CHLL2</name>
<proteinExistence type="inferred from homology"/>
<protein>
    <recommendedName>
        <fullName evidence="1">Glycerol-3-phosphate acyltransferase</fullName>
    </recommendedName>
    <alternativeName>
        <fullName evidence="1">Acyl-PO4 G3P acyltransferase</fullName>
    </alternativeName>
    <alternativeName>
        <fullName evidence="1">Acyl-phosphate--glycerol-3-phosphate acyltransferase</fullName>
    </alternativeName>
    <alternativeName>
        <fullName evidence="1">G3P acyltransferase</fullName>
        <shortName evidence="1">GPAT</shortName>
        <ecNumber evidence="1">2.3.1.275</ecNumber>
    </alternativeName>
    <alternativeName>
        <fullName evidence="1">Lysophosphatidic acid synthase</fullName>
        <shortName evidence="1">LPA synthase</shortName>
    </alternativeName>
</protein>
<gene>
    <name evidence="1" type="primary">plsY</name>
    <name type="ordered locus">Clim_2417</name>
</gene>
<evidence type="ECO:0000255" key="1">
    <source>
        <dbReference type="HAMAP-Rule" id="MF_01043"/>
    </source>
</evidence>